<feature type="chain" id="PRO_0000371299" description="Reticulon-like protein B18">
    <location>
        <begin position="1"/>
        <end position="457"/>
    </location>
</feature>
<feature type="transmembrane region" description="Helical" evidence="2">
    <location>
        <begin position="208"/>
        <end position="228"/>
    </location>
</feature>
<feature type="transmembrane region" description="Helical" evidence="2">
    <location>
        <begin position="230"/>
        <end position="250"/>
    </location>
</feature>
<feature type="transmembrane region" description="Helical" evidence="2">
    <location>
        <begin position="314"/>
        <end position="334"/>
    </location>
</feature>
<feature type="transmembrane region" description="Helical" evidence="2">
    <location>
        <begin position="377"/>
        <end position="397"/>
    </location>
</feature>
<feature type="domain" description="Reticulon" evidence="3">
    <location>
        <begin position="195"/>
        <end position="385"/>
    </location>
</feature>
<feature type="region of interest" description="Disordered" evidence="4">
    <location>
        <begin position="94"/>
        <end position="183"/>
    </location>
</feature>
<feature type="region of interest" description="Disordered" evidence="4">
    <location>
        <begin position="407"/>
        <end position="457"/>
    </location>
</feature>
<feature type="compositionally biased region" description="Basic and acidic residues" evidence="4">
    <location>
        <begin position="124"/>
        <end position="136"/>
    </location>
</feature>
<feature type="compositionally biased region" description="Basic residues" evidence="4">
    <location>
        <begin position="149"/>
        <end position="163"/>
    </location>
</feature>
<feature type="compositionally biased region" description="Low complexity" evidence="4">
    <location>
        <begin position="166"/>
        <end position="183"/>
    </location>
</feature>
<feature type="compositionally biased region" description="Basic and acidic residues" evidence="4">
    <location>
        <begin position="413"/>
        <end position="439"/>
    </location>
</feature>
<feature type="sequence conflict" description="In Ref. 3; BAE99357." evidence="5" ref="3">
    <original>P</original>
    <variation>R</variation>
    <location>
        <position position="62"/>
    </location>
</feature>
<feature type="sequence conflict" description="In Ref. 4; AAM63049." evidence="5" ref="4">
    <original>F</original>
    <variation>L</variation>
    <location>
        <position position="218"/>
    </location>
</feature>
<proteinExistence type="evidence at transcript level"/>
<keyword id="KW-0256">Endoplasmic reticulum</keyword>
<keyword id="KW-0472">Membrane</keyword>
<keyword id="KW-1185">Reference proteome</keyword>
<keyword id="KW-0812">Transmembrane</keyword>
<keyword id="KW-1133">Transmembrane helix</keyword>
<dbReference type="EMBL" id="AL021749">
    <property type="protein sequence ID" value="CAA16882.1"/>
    <property type="status" value="ALT_SEQ"/>
    <property type="molecule type" value="Genomic_DNA"/>
</dbReference>
<dbReference type="EMBL" id="AL161572">
    <property type="protein sequence ID" value="CAB79645.1"/>
    <property type="status" value="ALT_SEQ"/>
    <property type="molecule type" value="Genomic_DNA"/>
</dbReference>
<dbReference type="EMBL" id="CP002687">
    <property type="protein sequence ID" value="AEE85486.1"/>
    <property type="molecule type" value="Genomic_DNA"/>
</dbReference>
<dbReference type="EMBL" id="AK227346">
    <property type="protein sequence ID" value="BAE99357.1"/>
    <property type="molecule type" value="mRNA"/>
</dbReference>
<dbReference type="EMBL" id="AY085834">
    <property type="protein sequence ID" value="AAM63049.1"/>
    <property type="molecule type" value="mRNA"/>
</dbReference>
<dbReference type="PIR" id="T04613">
    <property type="entry name" value="T04613"/>
</dbReference>
<dbReference type="RefSeq" id="NP_567809.1">
    <property type="nucleotide sequence ID" value="NM_118985.3"/>
</dbReference>
<dbReference type="SMR" id="Q8LDS3"/>
<dbReference type="FunCoup" id="Q8LDS3">
    <property type="interactions" value="392"/>
</dbReference>
<dbReference type="STRING" id="3702.Q8LDS3"/>
<dbReference type="PaxDb" id="3702-AT4G28430.1"/>
<dbReference type="ProteomicsDB" id="228071"/>
<dbReference type="EnsemblPlants" id="AT4G28430.1">
    <property type="protein sequence ID" value="AT4G28430.1"/>
    <property type="gene ID" value="AT4G28430"/>
</dbReference>
<dbReference type="GeneID" id="828960"/>
<dbReference type="Gramene" id="AT4G28430.1">
    <property type="protein sequence ID" value="AT4G28430.1"/>
    <property type="gene ID" value="AT4G28430"/>
</dbReference>
<dbReference type="KEGG" id="ath:AT4G28430"/>
<dbReference type="Araport" id="AT4G28430"/>
<dbReference type="TAIR" id="AT4G28430">
    <property type="gene designation" value="RTN18"/>
</dbReference>
<dbReference type="eggNOG" id="ENOG502QU5C">
    <property type="taxonomic scope" value="Eukaryota"/>
</dbReference>
<dbReference type="HOGENOM" id="CLU_036143_0_0_1"/>
<dbReference type="InParanoid" id="Q8LDS3"/>
<dbReference type="OMA" id="CYHESIN"/>
<dbReference type="PhylomeDB" id="Q8LDS3"/>
<dbReference type="PRO" id="PR:Q8LDS3"/>
<dbReference type="Proteomes" id="UP000006548">
    <property type="component" value="Chromosome 4"/>
</dbReference>
<dbReference type="ExpressionAtlas" id="Q8LDS3">
    <property type="expression patterns" value="baseline and differential"/>
</dbReference>
<dbReference type="GO" id="GO:0005789">
    <property type="term" value="C:endoplasmic reticulum membrane"/>
    <property type="evidence" value="ECO:0007669"/>
    <property type="project" value="UniProtKB-SubCell"/>
</dbReference>
<dbReference type="InterPro" id="IPR003388">
    <property type="entry name" value="Reticulon"/>
</dbReference>
<dbReference type="InterPro" id="IPR044647">
    <property type="entry name" value="RTNLB17/18/21"/>
</dbReference>
<dbReference type="PANTHER" id="PTHR46626">
    <property type="entry name" value="RETICULON-LIKE PROTEIN B17"/>
    <property type="match status" value="1"/>
</dbReference>
<dbReference type="PANTHER" id="PTHR46626:SF8">
    <property type="entry name" value="RETICULON-LIKE PROTEIN B18"/>
    <property type="match status" value="1"/>
</dbReference>
<dbReference type="Pfam" id="PF02453">
    <property type="entry name" value="Reticulon"/>
    <property type="match status" value="1"/>
</dbReference>
<dbReference type="PROSITE" id="PS50845">
    <property type="entry name" value="RETICULON"/>
    <property type="match status" value="1"/>
</dbReference>
<gene>
    <name type="primary">RTNLB18</name>
    <name type="ordered locus">At4g28430</name>
    <name type="ORF">F20O9.110</name>
</gene>
<name>RTNLR_ARATH</name>
<organism>
    <name type="scientific">Arabidopsis thaliana</name>
    <name type="common">Mouse-ear cress</name>
    <dbReference type="NCBI Taxonomy" id="3702"/>
    <lineage>
        <taxon>Eukaryota</taxon>
        <taxon>Viridiplantae</taxon>
        <taxon>Streptophyta</taxon>
        <taxon>Embryophyta</taxon>
        <taxon>Tracheophyta</taxon>
        <taxon>Spermatophyta</taxon>
        <taxon>Magnoliopsida</taxon>
        <taxon>eudicotyledons</taxon>
        <taxon>Gunneridae</taxon>
        <taxon>Pentapetalae</taxon>
        <taxon>rosids</taxon>
        <taxon>malvids</taxon>
        <taxon>Brassicales</taxon>
        <taxon>Brassicaceae</taxon>
        <taxon>Camelineae</taxon>
        <taxon>Arabidopsis</taxon>
    </lineage>
</organism>
<evidence type="ECO:0000250" key="1"/>
<evidence type="ECO:0000255" key="2"/>
<evidence type="ECO:0000255" key="3">
    <source>
        <dbReference type="PROSITE-ProRule" id="PRU00170"/>
    </source>
</evidence>
<evidence type="ECO:0000256" key="4">
    <source>
        <dbReference type="SAM" id="MobiDB-lite"/>
    </source>
</evidence>
<evidence type="ECO:0000305" key="5"/>
<reference key="1">
    <citation type="journal article" date="1999" name="Nature">
        <title>Sequence and analysis of chromosome 4 of the plant Arabidopsis thaliana.</title>
        <authorList>
            <person name="Mayer K.F.X."/>
            <person name="Schueller C."/>
            <person name="Wambutt R."/>
            <person name="Murphy G."/>
            <person name="Volckaert G."/>
            <person name="Pohl T."/>
            <person name="Duesterhoeft A."/>
            <person name="Stiekema W."/>
            <person name="Entian K.-D."/>
            <person name="Terryn N."/>
            <person name="Harris B."/>
            <person name="Ansorge W."/>
            <person name="Brandt P."/>
            <person name="Grivell L.A."/>
            <person name="Rieger M."/>
            <person name="Weichselgartner M."/>
            <person name="de Simone V."/>
            <person name="Obermaier B."/>
            <person name="Mache R."/>
            <person name="Mueller M."/>
            <person name="Kreis M."/>
            <person name="Delseny M."/>
            <person name="Puigdomenech P."/>
            <person name="Watson M."/>
            <person name="Schmidtheini T."/>
            <person name="Reichert B."/>
            <person name="Portetelle D."/>
            <person name="Perez-Alonso M."/>
            <person name="Boutry M."/>
            <person name="Bancroft I."/>
            <person name="Vos P."/>
            <person name="Hoheisel J."/>
            <person name="Zimmermann W."/>
            <person name="Wedler H."/>
            <person name="Ridley P."/>
            <person name="Langham S.-A."/>
            <person name="McCullagh B."/>
            <person name="Bilham L."/>
            <person name="Robben J."/>
            <person name="van der Schueren J."/>
            <person name="Grymonprez B."/>
            <person name="Chuang Y.-J."/>
            <person name="Vandenbussche F."/>
            <person name="Braeken M."/>
            <person name="Weltjens I."/>
            <person name="Voet M."/>
            <person name="Bastiaens I."/>
            <person name="Aert R."/>
            <person name="Defoor E."/>
            <person name="Weitzenegger T."/>
            <person name="Bothe G."/>
            <person name="Ramsperger U."/>
            <person name="Hilbert H."/>
            <person name="Braun M."/>
            <person name="Holzer E."/>
            <person name="Brandt A."/>
            <person name="Peters S."/>
            <person name="van Staveren M."/>
            <person name="Dirkse W."/>
            <person name="Mooijman P."/>
            <person name="Klein Lankhorst R."/>
            <person name="Rose M."/>
            <person name="Hauf J."/>
            <person name="Koetter P."/>
            <person name="Berneiser S."/>
            <person name="Hempel S."/>
            <person name="Feldpausch M."/>
            <person name="Lamberth S."/>
            <person name="Van den Daele H."/>
            <person name="De Keyser A."/>
            <person name="Buysshaert C."/>
            <person name="Gielen J."/>
            <person name="Villarroel R."/>
            <person name="De Clercq R."/>
            <person name="van Montagu M."/>
            <person name="Rogers J."/>
            <person name="Cronin A."/>
            <person name="Quail M.A."/>
            <person name="Bray-Allen S."/>
            <person name="Clark L."/>
            <person name="Doggett J."/>
            <person name="Hall S."/>
            <person name="Kay M."/>
            <person name="Lennard N."/>
            <person name="McLay K."/>
            <person name="Mayes R."/>
            <person name="Pettett A."/>
            <person name="Rajandream M.A."/>
            <person name="Lyne M."/>
            <person name="Benes V."/>
            <person name="Rechmann S."/>
            <person name="Borkova D."/>
            <person name="Bloecker H."/>
            <person name="Scharfe M."/>
            <person name="Grimm M."/>
            <person name="Loehnert T.-H."/>
            <person name="Dose S."/>
            <person name="de Haan M."/>
            <person name="Maarse A.C."/>
            <person name="Schaefer M."/>
            <person name="Mueller-Auer S."/>
            <person name="Gabel C."/>
            <person name="Fuchs M."/>
            <person name="Fartmann B."/>
            <person name="Granderath K."/>
            <person name="Dauner D."/>
            <person name="Herzl A."/>
            <person name="Neumann S."/>
            <person name="Argiriou A."/>
            <person name="Vitale D."/>
            <person name="Liguori R."/>
            <person name="Piravandi E."/>
            <person name="Massenet O."/>
            <person name="Quigley F."/>
            <person name="Clabauld G."/>
            <person name="Muendlein A."/>
            <person name="Felber R."/>
            <person name="Schnabl S."/>
            <person name="Hiller R."/>
            <person name="Schmidt W."/>
            <person name="Lecharny A."/>
            <person name="Aubourg S."/>
            <person name="Chefdor F."/>
            <person name="Cooke R."/>
            <person name="Berger C."/>
            <person name="Monfort A."/>
            <person name="Casacuberta E."/>
            <person name="Gibbons T."/>
            <person name="Weber N."/>
            <person name="Vandenbol M."/>
            <person name="Bargues M."/>
            <person name="Terol J."/>
            <person name="Torres A."/>
            <person name="Perez-Perez A."/>
            <person name="Purnelle B."/>
            <person name="Bent E."/>
            <person name="Johnson S."/>
            <person name="Tacon D."/>
            <person name="Jesse T."/>
            <person name="Heijnen L."/>
            <person name="Schwarz S."/>
            <person name="Scholler P."/>
            <person name="Heber S."/>
            <person name="Francs P."/>
            <person name="Bielke C."/>
            <person name="Frishman D."/>
            <person name="Haase D."/>
            <person name="Lemcke K."/>
            <person name="Mewes H.-W."/>
            <person name="Stocker S."/>
            <person name="Zaccaria P."/>
            <person name="Bevan M."/>
            <person name="Wilson R.K."/>
            <person name="de la Bastide M."/>
            <person name="Habermann K."/>
            <person name="Parnell L."/>
            <person name="Dedhia N."/>
            <person name="Gnoj L."/>
            <person name="Schutz K."/>
            <person name="Huang E."/>
            <person name="Spiegel L."/>
            <person name="Sekhon M."/>
            <person name="Murray J."/>
            <person name="Sheet P."/>
            <person name="Cordes M."/>
            <person name="Abu-Threideh J."/>
            <person name="Stoneking T."/>
            <person name="Kalicki J."/>
            <person name="Graves T."/>
            <person name="Harmon G."/>
            <person name="Edwards J."/>
            <person name="Latreille P."/>
            <person name="Courtney L."/>
            <person name="Cloud J."/>
            <person name="Abbott A."/>
            <person name="Scott K."/>
            <person name="Johnson D."/>
            <person name="Minx P."/>
            <person name="Bentley D."/>
            <person name="Fulton B."/>
            <person name="Miller N."/>
            <person name="Greco T."/>
            <person name="Kemp K."/>
            <person name="Kramer J."/>
            <person name="Fulton L."/>
            <person name="Mardis E."/>
            <person name="Dante M."/>
            <person name="Pepin K."/>
            <person name="Hillier L.W."/>
            <person name="Nelson J."/>
            <person name="Spieth J."/>
            <person name="Ryan E."/>
            <person name="Andrews S."/>
            <person name="Geisel C."/>
            <person name="Layman D."/>
            <person name="Du H."/>
            <person name="Ali J."/>
            <person name="Berghoff A."/>
            <person name="Jones K."/>
            <person name="Drone K."/>
            <person name="Cotton M."/>
            <person name="Joshu C."/>
            <person name="Antonoiu B."/>
            <person name="Zidanic M."/>
            <person name="Strong C."/>
            <person name="Sun H."/>
            <person name="Lamar B."/>
            <person name="Yordan C."/>
            <person name="Ma P."/>
            <person name="Zhong J."/>
            <person name="Preston R."/>
            <person name="Vil D."/>
            <person name="Shekher M."/>
            <person name="Matero A."/>
            <person name="Shah R."/>
            <person name="Swaby I.K."/>
            <person name="O'Shaughnessy A."/>
            <person name="Rodriguez M."/>
            <person name="Hoffman J."/>
            <person name="Till S."/>
            <person name="Granat S."/>
            <person name="Shohdy N."/>
            <person name="Hasegawa A."/>
            <person name="Hameed A."/>
            <person name="Lodhi M."/>
            <person name="Johnson A."/>
            <person name="Chen E."/>
            <person name="Marra M.A."/>
            <person name="Martienssen R."/>
            <person name="McCombie W.R."/>
        </authorList>
    </citation>
    <scope>NUCLEOTIDE SEQUENCE [LARGE SCALE GENOMIC DNA]</scope>
    <source>
        <strain>cv. Columbia</strain>
    </source>
</reference>
<reference key="2">
    <citation type="journal article" date="2017" name="Plant J.">
        <title>Araport11: a complete reannotation of the Arabidopsis thaliana reference genome.</title>
        <authorList>
            <person name="Cheng C.Y."/>
            <person name="Krishnakumar V."/>
            <person name="Chan A.P."/>
            <person name="Thibaud-Nissen F."/>
            <person name="Schobel S."/>
            <person name="Town C.D."/>
        </authorList>
    </citation>
    <scope>GENOME REANNOTATION</scope>
    <source>
        <strain>cv. Columbia</strain>
    </source>
</reference>
<reference key="3">
    <citation type="submission" date="2006-07" db="EMBL/GenBank/DDBJ databases">
        <title>Large-scale analysis of RIKEN Arabidopsis full-length (RAFL) cDNAs.</title>
        <authorList>
            <person name="Totoki Y."/>
            <person name="Seki M."/>
            <person name="Ishida J."/>
            <person name="Nakajima M."/>
            <person name="Enju A."/>
            <person name="Kamiya A."/>
            <person name="Narusaka M."/>
            <person name="Shin-i T."/>
            <person name="Nakagawa M."/>
            <person name="Sakamoto N."/>
            <person name="Oishi K."/>
            <person name="Kohara Y."/>
            <person name="Kobayashi M."/>
            <person name="Toyoda A."/>
            <person name="Sakaki Y."/>
            <person name="Sakurai T."/>
            <person name="Iida K."/>
            <person name="Akiyama K."/>
            <person name="Satou M."/>
            <person name="Toyoda T."/>
            <person name="Konagaya A."/>
            <person name="Carninci P."/>
            <person name="Kawai J."/>
            <person name="Hayashizaki Y."/>
            <person name="Shinozaki K."/>
        </authorList>
    </citation>
    <scope>NUCLEOTIDE SEQUENCE [LARGE SCALE MRNA]</scope>
    <source>
        <strain>cv. Columbia</strain>
    </source>
</reference>
<reference key="4">
    <citation type="submission" date="2002-03" db="EMBL/GenBank/DDBJ databases">
        <title>Full-length cDNA from Arabidopsis thaliana.</title>
        <authorList>
            <person name="Brover V.V."/>
            <person name="Troukhan M.E."/>
            <person name="Alexandrov N.A."/>
            <person name="Lu Y.-P."/>
            <person name="Flavell R.B."/>
            <person name="Feldmann K.A."/>
        </authorList>
    </citation>
    <scope>NUCLEOTIDE SEQUENCE [LARGE SCALE MRNA]</scope>
</reference>
<reference key="5">
    <citation type="journal article" date="2007" name="FEBS Lett.">
        <title>Reticulon-like proteins in Arabidopsis thaliana: structural organization and ER localization.</title>
        <authorList>
            <person name="Nziengui H."/>
            <person name="Bouhidel K."/>
            <person name="Pillon D."/>
            <person name="Der C."/>
            <person name="Marty F."/>
            <person name="Schoefs B."/>
        </authorList>
    </citation>
    <scope>GENE FAMILY</scope>
    <scope>NOMENCLATURE</scope>
</reference>
<protein>
    <recommendedName>
        <fullName>Reticulon-like protein B18</fullName>
        <shortName>AtRTNLB18</shortName>
    </recommendedName>
</protein>
<comment type="subcellular location">
    <subcellularLocation>
        <location evidence="1">Endoplasmic reticulum membrane</location>
        <topology evidence="1">Multi-pass membrane protein</topology>
    </subcellularLocation>
</comment>
<comment type="sequence caution" evidence="5">
    <conflict type="erroneous gene model prediction">
        <sequence resource="EMBL-CDS" id="CAA16882"/>
    </conflict>
</comment>
<comment type="sequence caution" evidence="5">
    <conflict type="erroneous gene model prediction">
        <sequence resource="EMBL-CDS" id="CAB79645"/>
    </conflict>
</comment>
<sequence>MDSTTTPPSLRSNTRSALRLARNNKTLVKSHIPSLDLVLLSPKNNNGTPYPSPVSLSSPSSPVTLREILLLSPSPLRKSRTRLSNRFDMEAAEAAVTARRSKTKGGQNGLLASPSPRNFRRSRLRSEAMVDTKENTEPIVVVTDEKKQNQRKQKKLGRSKKEKHSSVPLLASPSPSSDQPQDVCQGDLERIRENISDLIMWRDVAKSTLWFGFGCICFLSTCFAAKGFNFSVFSAISYLGLLFLGVSFLSNTLRQRVTEEARRELKLSEDDVLRIARRMLPITNLAISKTSELFSGEPAMTLKVAPFVLMGAEYGYLITLWRLCAFGFFLSFTIPKLYSCYASQLNQKVECAQRRFVEAWGVCTHKKFVAGSAVTAFWNLTSLKTRFIAVFIIVVVIRYRRQNLQLDSEDEEEKKQQEKTHPEQQKSPEDKSTSPRSAEEEQALVLVAETKAPKKLY</sequence>
<accession>Q8LDS3</accession>
<accession>O49452</accession>
<accession>Q0WU41</accession>